<sequence length="435" mass="47590">MPNSNRAQPERTMMQAEVRIERYADQGRCVAHIDGRVVFVRFALPDELVRVELDEPHDRDDRFWTGEVVEVLEPSEDRVTPAWPLAGPLAMGGGVGGADLVHVSLPGQLKWKAITVSEQMSRLGHIDVAVPIERMPGDKAAGGLNWRTRIEMIADDNGMPSMRRRGTHNRVAIDTMPLATRTLLDVAKREHVWEGGFEPGSQIRLSVPEPRGEIVDTAAADDNYAVLVDGELRAGSQLLTEQVTINGTTFDYQVDANGFWQVHRQAPIALGTHVINLVNGQLQSAADAVIWDLYSGSGLFTLPLATMTGERTRMLSVEGARVAVKNAQRNLRAMNLNDVDARAGDVSRTLDHVPAHLAKPNVVVLDPPRAGARAKVCRQIAAAGASSVVYIACDPTSLARDTATLIGEGYELKDIRAFDIYPMTHHVETVALFTR</sequence>
<protein>
    <recommendedName>
        <fullName>Uncharacterized RNA methyltransferase BL1394</fullName>
        <ecNumber>2.1.1.-</ecNumber>
    </recommendedName>
</protein>
<evidence type="ECO:0000255" key="1">
    <source>
        <dbReference type="PROSITE-ProRule" id="PRU01024"/>
    </source>
</evidence>
<proteinExistence type="inferred from homology"/>
<organism>
    <name type="scientific">Bifidobacterium longum (strain NCC 2705)</name>
    <dbReference type="NCBI Taxonomy" id="206672"/>
    <lineage>
        <taxon>Bacteria</taxon>
        <taxon>Bacillati</taxon>
        <taxon>Actinomycetota</taxon>
        <taxon>Actinomycetes</taxon>
        <taxon>Bifidobacteriales</taxon>
        <taxon>Bifidobacteriaceae</taxon>
        <taxon>Bifidobacterium</taxon>
    </lineage>
</organism>
<feature type="chain" id="PRO_0000161958" description="Uncharacterized RNA methyltransferase BL1394">
    <location>
        <begin position="1"/>
        <end position="435"/>
    </location>
</feature>
<feature type="active site" description="Nucleophile" evidence="1">
    <location>
        <position position="393"/>
    </location>
</feature>
<feature type="binding site" evidence="1">
    <location>
        <position position="261"/>
    </location>
    <ligand>
        <name>S-adenosyl-L-methionine</name>
        <dbReference type="ChEBI" id="CHEBI:59789"/>
    </ligand>
</feature>
<feature type="binding site" evidence="1">
    <location>
        <position position="294"/>
    </location>
    <ligand>
        <name>S-adenosyl-L-methionine</name>
        <dbReference type="ChEBI" id="CHEBI:59789"/>
    </ligand>
</feature>
<feature type="binding site" evidence="1">
    <location>
        <position position="318"/>
    </location>
    <ligand>
        <name>S-adenosyl-L-methionine</name>
        <dbReference type="ChEBI" id="CHEBI:59789"/>
    </ligand>
</feature>
<feature type="binding site" evidence="1">
    <location>
        <position position="366"/>
    </location>
    <ligand>
        <name>S-adenosyl-L-methionine</name>
        <dbReference type="ChEBI" id="CHEBI:59789"/>
    </ligand>
</feature>
<keyword id="KW-0489">Methyltransferase</keyword>
<keyword id="KW-1185">Reference proteome</keyword>
<keyword id="KW-0949">S-adenosyl-L-methionine</keyword>
<keyword id="KW-0808">Transferase</keyword>
<comment type="similarity">
    <text evidence="1">Belongs to the class I-like SAM-binding methyltransferase superfamily. RNA M5U methyltransferase family.</text>
</comment>
<name>Y1394_BIFLO</name>
<reference key="1">
    <citation type="journal article" date="2002" name="Proc. Natl. Acad. Sci. U.S.A.">
        <title>The genome sequence of Bifidobacterium longum reflects its adaptation to the human gastrointestinal tract.</title>
        <authorList>
            <person name="Schell M.A."/>
            <person name="Karmirantzou M."/>
            <person name="Snel B."/>
            <person name="Vilanova D."/>
            <person name="Berger B."/>
            <person name="Pessi G."/>
            <person name="Zwahlen M.-C."/>
            <person name="Desiere F."/>
            <person name="Bork P."/>
            <person name="Delley M."/>
            <person name="Pridmore R.D."/>
            <person name="Arigoni F."/>
        </authorList>
    </citation>
    <scope>NUCLEOTIDE SEQUENCE [LARGE SCALE GENOMIC DNA]</scope>
    <source>
        <strain>NCC 2705</strain>
    </source>
</reference>
<gene>
    <name type="ordered locus">BL1394</name>
</gene>
<accession>Q8G4I8</accession>
<dbReference type="EC" id="2.1.1.-"/>
<dbReference type="EMBL" id="AE014295">
    <property type="protein sequence ID" value="AAN25193.1"/>
    <property type="molecule type" value="Genomic_DNA"/>
</dbReference>
<dbReference type="RefSeq" id="NP_696557.1">
    <property type="nucleotide sequence ID" value="NC_004307.2"/>
</dbReference>
<dbReference type="SMR" id="Q8G4I8"/>
<dbReference type="STRING" id="206672.BL1394"/>
<dbReference type="EnsemblBacteria" id="AAN25193">
    <property type="protein sequence ID" value="AAN25193"/>
    <property type="gene ID" value="BL1394"/>
</dbReference>
<dbReference type="KEGG" id="blo:BL1394"/>
<dbReference type="PATRIC" id="fig|206672.9.peg.252"/>
<dbReference type="HOGENOM" id="CLU_014689_7_0_11"/>
<dbReference type="OrthoDB" id="9804590at2"/>
<dbReference type="PhylomeDB" id="Q8G4I8"/>
<dbReference type="Proteomes" id="UP000000439">
    <property type="component" value="Chromosome"/>
</dbReference>
<dbReference type="GO" id="GO:0070041">
    <property type="term" value="F:rRNA (uridine-C5-)-methyltransferase activity"/>
    <property type="evidence" value="ECO:0007669"/>
    <property type="project" value="TreeGrafter"/>
</dbReference>
<dbReference type="GO" id="GO:0070475">
    <property type="term" value="P:rRNA base methylation"/>
    <property type="evidence" value="ECO:0007669"/>
    <property type="project" value="TreeGrafter"/>
</dbReference>
<dbReference type="CDD" id="cd02440">
    <property type="entry name" value="AdoMet_MTases"/>
    <property type="match status" value="1"/>
</dbReference>
<dbReference type="Gene3D" id="2.40.50.140">
    <property type="entry name" value="Nucleic acid-binding proteins"/>
    <property type="match status" value="1"/>
</dbReference>
<dbReference type="Gene3D" id="3.40.50.150">
    <property type="entry name" value="Vaccinia Virus protein VP39"/>
    <property type="match status" value="1"/>
</dbReference>
<dbReference type="InterPro" id="IPR030390">
    <property type="entry name" value="MeTrfase_TrmA_AS"/>
</dbReference>
<dbReference type="InterPro" id="IPR012340">
    <property type="entry name" value="NA-bd_OB-fold"/>
</dbReference>
<dbReference type="InterPro" id="IPR029063">
    <property type="entry name" value="SAM-dependent_MTases_sf"/>
</dbReference>
<dbReference type="InterPro" id="IPR002792">
    <property type="entry name" value="TRAM_dom"/>
</dbReference>
<dbReference type="InterPro" id="IPR010280">
    <property type="entry name" value="U5_MeTrfase_fam"/>
</dbReference>
<dbReference type="PANTHER" id="PTHR11061">
    <property type="entry name" value="RNA M5U METHYLTRANSFERASE"/>
    <property type="match status" value="1"/>
</dbReference>
<dbReference type="PANTHER" id="PTHR11061:SF30">
    <property type="entry name" value="TRNA (URACIL(54)-C(5))-METHYLTRANSFERASE"/>
    <property type="match status" value="1"/>
</dbReference>
<dbReference type="Pfam" id="PF01938">
    <property type="entry name" value="TRAM"/>
    <property type="match status" value="1"/>
</dbReference>
<dbReference type="Pfam" id="PF05958">
    <property type="entry name" value="tRNA_U5-meth_tr"/>
    <property type="match status" value="1"/>
</dbReference>
<dbReference type="SUPFAM" id="SSF50249">
    <property type="entry name" value="Nucleic acid-binding proteins"/>
    <property type="match status" value="1"/>
</dbReference>
<dbReference type="SUPFAM" id="SSF53335">
    <property type="entry name" value="S-adenosyl-L-methionine-dependent methyltransferases"/>
    <property type="match status" value="1"/>
</dbReference>
<dbReference type="PROSITE" id="PS51687">
    <property type="entry name" value="SAM_MT_RNA_M5U"/>
    <property type="match status" value="1"/>
</dbReference>
<dbReference type="PROSITE" id="PS01230">
    <property type="entry name" value="TRMA_1"/>
    <property type="match status" value="1"/>
</dbReference>